<accession>Q8NFW9</accession>
<accession>B3KWM3</accession>
<accession>B3KWW4</accession>
<accession>B7Z2H1</accession>
<accession>B7Z9V3</accession>
<accession>G3XAI8</accession>
<accession>Q32M41</accession>
<accession>Q32M42</accession>
<accession>Q569F7</accession>
<accession>Q8IUF5</accession>
<accession>Q9Y3V4</accession>
<protein>
    <recommendedName>
        <fullName>Rab effector MyRIP</fullName>
    </recommendedName>
    <alternativeName>
        <fullName>Exophilin-8</fullName>
    </alternativeName>
    <alternativeName>
        <fullName>Myosin-VIIa- and Rab-interacting protein</fullName>
    </alternativeName>
    <alternativeName>
        <fullName>Synaptotagmin-like protein lacking C2 domains C</fullName>
        <shortName>SlaC2-c</shortName>
        <shortName>Slp homolog lacking C2 domains c</shortName>
    </alternativeName>
</protein>
<reference key="1">
    <citation type="journal article" date="2002" name="EMBO Rep.">
        <title>MyRIP, a novel Rab effector, enables myosin VIIa recruitment to retinal melanosomes.</title>
        <authorList>
            <person name="El-Amraoui A."/>
            <person name="Schonn J.-S."/>
            <person name="Kuessel-Andermann P."/>
            <person name="Blanchard S."/>
            <person name="Desnos C."/>
            <person name="Henry J.-P."/>
            <person name="Wolfrum U."/>
            <person name="Darchen F."/>
            <person name="Petit C."/>
        </authorList>
    </citation>
    <scope>NUCLEOTIDE SEQUENCE [MRNA] (ISOFORM 1)</scope>
    <scope>INTERACTION WITH RAB27A AND MYO7A</scope>
    <scope>SUBCELLULAR LOCATION</scope>
    <source>
        <tissue>Retina</tissue>
    </source>
</reference>
<reference key="2">
    <citation type="journal article" date="2002" name="J. Biol. Chem.">
        <title>Slac2-c (synaptotagmin-like protein homologue lacking C2 domains-c), a novel linker protein that interacts with Rab27, myosin Va/VIIa, and actin.</title>
        <authorList>
            <person name="Fukuda M."/>
            <person name="Kuroda T.S."/>
        </authorList>
    </citation>
    <scope>NUCLEOTIDE SEQUENCE [MRNA] (ISOFORM 1)</scope>
    <scope>INTERACTION WITH MYO5A AND MYO7A</scope>
</reference>
<reference key="3">
    <citation type="journal article" date="2004" name="Nat. Genet.">
        <title>Complete sequencing and characterization of 21,243 full-length human cDNAs.</title>
        <authorList>
            <person name="Ota T."/>
            <person name="Suzuki Y."/>
            <person name="Nishikawa T."/>
            <person name="Otsuki T."/>
            <person name="Sugiyama T."/>
            <person name="Irie R."/>
            <person name="Wakamatsu A."/>
            <person name="Hayashi K."/>
            <person name="Sato H."/>
            <person name="Nagai K."/>
            <person name="Kimura K."/>
            <person name="Makita H."/>
            <person name="Sekine M."/>
            <person name="Obayashi M."/>
            <person name="Nishi T."/>
            <person name="Shibahara T."/>
            <person name="Tanaka T."/>
            <person name="Ishii S."/>
            <person name="Yamamoto J."/>
            <person name="Saito K."/>
            <person name="Kawai Y."/>
            <person name="Isono Y."/>
            <person name="Nakamura Y."/>
            <person name="Nagahari K."/>
            <person name="Murakami K."/>
            <person name="Yasuda T."/>
            <person name="Iwayanagi T."/>
            <person name="Wagatsuma M."/>
            <person name="Shiratori A."/>
            <person name="Sudo H."/>
            <person name="Hosoiri T."/>
            <person name="Kaku Y."/>
            <person name="Kodaira H."/>
            <person name="Kondo H."/>
            <person name="Sugawara M."/>
            <person name="Takahashi M."/>
            <person name="Kanda K."/>
            <person name="Yokoi T."/>
            <person name="Furuya T."/>
            <person name="Kikkawa E."/>
            <person name="Omura Y."/>
            <person name="Abe K."/>
            <person name="Kamihara K."/>
            <person name="Katsuta N."/>
            <person name="Sato K."/>
            <person name="Tanikawa M."/>
            <person name="Yamazaki M."/>
            <person name="Ninomiya K."/>
            <person name="Ishibashi T."/>
            <person name="Yamashita H."/>
            <person name="Murakawa K."/>
            <person name="Fujimori K."/>
            <person name="Tanai H."/>
            <person name="Kimata M."/>
            <person name="Watanabe M."/>
            <person name="Hiraoka S."/>
            <person name="Chiba Y."/>
            <person name="Ishida S."/>
            <person name="Ono Y."/>
            <person name="Takiguchi S."/>
            <person name="Watanabe S."/>
            <person name="Yosida M."/>
            <person name="Hotuta T."/>
            <person name="Kusano J."/>
            <person name="Kanehori K."/>
            <person name="Takahashi-Fujii A."/>
            <person name="Hara H."/>
            <person name="Tanase T.-O."/>
            <person name="Nomura Y."/>
            <person name="Togiya S."/>
            <person name="Komai F."/>
            <person name="Hara R."/>
            <person name="Takeuchi K."/>
            <person name="Arita M."/>
            <person name="Imose N."/>
            <person name="Musashino K."/>
            <person name="Yuuki H."/>
            <person name="Oshima A."/>
            <person name="Sasaki N."/>
            <person name="Aotsuka S."/>
            <person name="Yoshikawa Y."/>
            <person name="Matsunawa H."/>
            <person name="Ichihara T."/>
            <person name="Shiohata N."/>
            <person name="Sano S."/>
            <person name="Moriya S."/>
            <person name="Momiyama H."/>
            <person name="Satoh N."/>
            <person name="Takami S."/>
            <person name="Terashima Y."/>
            <person name="Suzuki O."/>
            <person name="Nakagawa S."/>
            <person name="Senoh A."/>
            <person name="Mizoguchi H."/>
            <person name="Goto Y."/>
            <person name="Shimizu F."/>
            <person name="Wakebe H."/>
            <person name="Hishigaki H."/>
            <person name="Watanabe T."/>
            <person name="Sugiyama A."/>
            <person name="Takemoto M."/>
            <person name="Kawakami B."/>
            <person name="Yamazaki M."/>
            <person name="Watanabe K."/>
            <person name="Kumagai A."/>
            <person name="Itakura S."/>
            <person name="Fukuzumi Y."/>
            <person name="Fujimori Y."/>
            <person name="Komiyama M."/>
            <person name="Tashiro H."/>
            <person name="Tanigami A."/>
            <person name="Fujiwara T."/>
            <person name="Ono T."/>
            <person name="Yamada K."/>
            <person name="Fujii Y."/>
            <person name="Ozaki K."/>
            <person name="Hirao M."/>
            <person name="Ohmori Y."/>
            <person name="Kawabata A."/>
            <person name="Hikiji T."/>
            <person name="Kobatake N."/>
            <person name="Inagaki H."/>
            <person name="Ikema Y."/>
            <person name="Okamoto S."/>
            <person name="Okitani R."/>
            <person name="Kawakami T."/>
            <person name="Noguchi S."/>
            <person name="Itoh T."/>
            <person name="Shigeta K."/>
            <person name="Senba T."/>
            <person name="Matsumura K."/>
            <person name="Nakajima Y."/>
            <person name="Mizuno T."/>
            <person name="Morinaga M."/>
            <person name="Sasaki M."/>
            <person name="Togashi T."/>
            <person name="Oyama M."/>
            <person name="Hata H."/>
            <person name="Watanabe M."/>
            <person name="Komatsu T."/>
            <person name="Mizushima-Sugano J."/>
            <person name="Satoh T."/>
            <person name="Shirai Y."/>
            <person name="Takahashi Y."/>
            <person name="Nakagawa K."/>
            <person name="Okumura K."/>
            <person name="Nagase T."/>
            <person name="Nomura N."/>
            <person name="Kikuchi H."/>
            <person name="Masuho Y."/>
            <person name="Yamashita R."/>
            <person name="Nakai K."/>
            <person name="Yada T."/>
            <person name="Nakamura Y."/>
            <person name="Ohara O."/>
            <person name="Isogai T."/>
            <person name="Sugano S."/>
        </authorList>
    </citation>
    <scope>NUCLEOTIDE SEQUENCE [LARGE SCALE MRNA] (ISOFORMS 2; 3 AND 4)</scope>
    <source>
        <tissue>Brain</tissue>
        <tissue>Hippocampus</tissue>
        <tissue>Teratocarcinoma</tissue>
        <tissue>Testis</tissue>
    </source>
</reference>
<reference key="4">
    <citation type="journal article" date="2006" name="Nature">
        <title>The DNA sequence, annotation and analysis of human chromosome 3.</title>
        <authorList>
            <person name="Muzny D.M."/>
            <person name="Scherer S.E."/>
            <person name="Kaul R."/>
            <person name="Wang J."/>
            <person name="Yu J."/>
            <person name="Sudbrak R."/>
            <person name="Buhay C.J."/>
            <person name="Chen R."/>
            <person name="Cree A."/>
            <person name="Ding Y."/>
            <person name="Dugan-Rocha S."/>
            <person name="Gill R."/>
            <person name="Gunaratne P."/>
            <person name="Harris R.A."/>
            <person name="Hawes A.C."/>
            <person name="Hernandez J."/>
            <person name="Hodgson A.V."/>
            <person name="Hume J."/>
            <person name="Jackson A."/>
            <person name="Khan Z.M."/>
            <person name="Kovar-Smith C."/>
            <person name="Lewis L.R."/>
            <person name="Lozado R.J."/>
            <person name="Metzker M.L."/>
            <person name="Milosavljevic A."/>
            <person name="Miner G.R."/>
            <person name="Morgan M.B."/>
            <person name="Nazareth L.V."/>
            <person name="Scott G."/>
            <person name="Sodergren E."/>
            <person name="Song X.-Z."/>
            <person name="Steffen D."/>
            <person name="Wei S."/>
            <person name="Wheeler D.A."/>
            <person name="Wright M.W."/>
            <person name="Worley K.C."/>
            <person name="Yuan Y."/>
            <person name="Zhang Z."/>
            <person name="Adams C.Q."/>
            <person name="Ansari-Lari M.A."/>
            <person name="Ayele M."/>
            <person name="Brown M.J."/>
            <person name="Chen G."/>
            <person name="Chen Z."/>
            <person name="Clendenning J."/>
            <person name="Clerc-Blankenburg K.P."/>
            <person name="Chen R."/>
            <person name="Chen Z."/>
            <person name="Davis C."/>
            <person name="Delgado O."/>
            <person name="Dinh H.H."/>
            <person name="Dong W."/>
            <person name="Draper H."/>
            <person name="Ernst S."/>
            <person name="Fu G."/>
            <person name="Gonzalez-Garay M.L."/>
            <person name="Garcia D.K."/>
            <person name="Gillett W."/>
            <person name="Gu J."/>
            <person name="Hao B."/>
            <person name="Haugen E."/>
            <person name="Havlak P."/>
            <person name="He X."/>
            <person name="Hennig S."/>
            <person name="Hu S."/>
            <person name="Huang W."/>
            <person name="Jackson L.R."/>
            <person name="Jacob L.S."/>
            <person name="Kelly S.H."/>
            <person name="Kube M."/>
            <person name="Levy R."/>
            <person name="Li Z."/>
            <person name="Liu B."/>
            <person name="Liu J."/>
            <person name="Liu W."/>
            <person name="Lu J."/>
            <person name="Maheshwari M."/>
            <person name="Nguyen B.-V."/>
            <person name="Okwuonu G.O."/>
            <person name="Palmeiri A."/>
            <person name="Pasternak S."/>
            <person name="Perez L.M."/>
            <person name="Phelps K.A."/>
            <person name="Plopper F.J."/>
            <person name="Qiang B."/>
            <person name="Raymond C."/>
            <person name="Rodriguez R."/>
            <person name="Saenphimmachak C."/>
            <person name="Santibanez J."/>
            <person name="Shen H."/>
            <person name="Shen Y."/>
            <person name="Subramanian S."/>
            <person name="Tabor P.E."/>
            <person name="Verduzco D."/>
            <person name="Waldron L."/>
            <person name="Wang J."/>
            <person name="Wang J."/>
            <person name="Wang Q."/>
            <person name="Williams G.A."/>
            <person name="Wong G.K.-S."/>
            <person name="Yao Z."/>
            <person name="Zhang J."/>
            <person name="Zhang X."/>
            <person name="Zhao G."/>
            <person name="Zhou J."/>
            <person name="Zhou Y."/>
            <person name="Nelson D."/>
            <person name="Lehrach H."/>
            <person name="Reinhardt R."/>
            <person name="Naylor S.L."/>
            <person name="Yang H."/>
            <person name="Olson M."/>
            <person name="Weinstock G."/>
            <person name="Gibbs R.A."/>
        </authorList>
    </citation>
    <scope>NUCLEOTIDE SEQUENCE [LARGE SCALE GENOMIC DNA]</scope>
</reference>
<reference key="5">
    <citation type="submission" date="2005-07" db="EMBL/GenBank/DDBJ databases">
        <authorList>
            <person name="Mural R.J."/>
            <person name="Istrail S."/>
            <person name="Sutton G.G."/>
            <person name="Florea L."/>
            <person name="Halpern A.L."/>
            <person name="Mobarry C.M."/>
            <person name="Lippert R."/>
            <person name="Walenz B."/>
            <person name="Shatkay H."/>
            <person name="Dew I."/>
            <person name="Miller J.R."/>
            <person name="Flanigan M.J."/>
            <person name="Edwards N.J."/>
            <person name="Bolanos R."/>
            <person name="Fasulo D."/>
            <person name="Halldorsson B.V."/>
            <person name="Hannenhalli S."/>
            <person name="Turner R."/>
            <person name="Yooseph S."/>
            <person name="Lu F."/>
            <person name="Nusskern D.R."/>
            <person name="Shue B.C."/>
            <person name="Zheng X.H."/>
            <person name="Zhong F."/>
            <person name="Delcher A.L."/>
            <person name="Huson D.H."/>
            <person name="Kravitz S.A."/>
            <person name="Mouchard L."/>
            <person name="Reinert K."/>
            <person name="Remington K.A."/>
            <person name="Clark A.G."/>
            <person name="Waterman M.S."/>
            <person name="Eichler E.E."/>
            <person name="Adams M.D."/>
            <person name="Hunkapiller M.W."/>
            <person name="Myers E.W."/>
            <person name="Venter J.C."/>
        </authorList>
    </citation>
    <scope>NUCLEOTIDE SEQUENCE [LARGE SCALE GENOMIC DNA]</scope>
</reference>
<reference key="6">
    <citation type="journal article" date="2004" name="Genome Res.">
        <title>The status, quality, and expansion of the NIH full-length cDNA project: the Mammalian Gene Collection (MGC).</title>
        <authorList>
            <consortium name="The MGC Project Team"/>
        </authorList>
    </citation>
    <scope>NUCLEOTIDE SEQUENCE [LARGE SCALE MRNA] (ISOFORMS 1; 5 AND 6)</scope>
    <scope>VARIANT THR-312</scope>
    <source>
        <tissue>Lymph</tissue>
    </source>
</reference>
<reference key="7">
    <citation type="journal article" date="2007" name="BMC Genomics">
        <title>The full-ORF clone resource of the German cDNA consortium.</title>
        <authorList>
            <person name="Bechtel S."/>
            <person name="Rosenfelder H."/>
            <person name="Duda A."/>
            <person name="Schmidt C.P."/>
            <person name="Ernst U."/>
            <person name="Wellenreuther R."/>
            <person name="Mehrle A."/>
            <person name="Schuster C."/>
            <person name="Bahr A."/>
            <person name="Bloecker H."/>
            <person name="Heubner D."/>
            <person name="Hoerlein A."/>
            <person name="Michel G."/>
            <person name="Wedler H."/>
            <person name="Koehrer K."/>
            <person name="Ottenwaelder B."/>
            <person name="Poustka A."/>
            <person name="Wiemann S."/>
            <person name="Schupp I."/>
        </authorList>
    </citation>
    <scope>NUCLEOTIDE SEQUENCE [LARGE SCALE MRNA] OF 699-859</scope>
    <source>
        <tissue>Uterus</tissue>
    </source>
</reference>
<reference key="8">
    <citation type="journal article" date="2007" name="J. Biol. Chem.">
        <title>MyRIP anchors protein kinase A to the exocyst complex.</title>
        <authorList>
            <person name="Goehring A.S."/>
            <person name="Pedroja B.S."/>
            <person name="Hinke S.A."/>
            <person name="Langeberg L.K."/>
            <person name="Scott J.D."/>
        </authorList>
    </citation>
    <scope>INTERACTION WITH PRKAR2A</scope>
</reference>
<reference key="9">
    <citation type="journal article" date="2014" name="J. Proteomics">
        <title>An enzyme assisted RP-RPLC approach for in-depth analysis of human liver phosphoproteome.</title>
        <authorList>
            <person name="Bian Y."/>
            <person name="Song C."/>
            <person name="Cheng K."/>
            <person name="Dong M."/>
            <person name="Wang F."/>
            <person name="Huang J."/>
            <person name="Sun D."/>
            <person name="Wang L."/>
            <person name="Ye M."/>
            <person name="Zou H."/>
        </authorList>
    </citation>
    <scope>IDENTIFICATION BY MASS SPECTROMETRY [LARGE SCALE ANALYSIS]</scope>
    <source>
        <tissue>Liver</tissue>
    </source>
</reference>
<gene>
    <name type="primary">MYRIP</name>
    <name type="synonym">SLAC2C</name>
</gene>
<feature type="chain" id="PRO_0000190224" description="Rab effector MyRIP">
    <location>
        <begin position="1"/>
        <end position="859"/>
    </location>
</feature>
<feature type="domain" description="RabBD" evidence="4">
    <location>
        <begin position="4"/>
        <end position="124"/>
    </location>
</feature>
<feature type="zinc finger region" description="FYVE-type">
    <location>
        <begin position="63"/>
        <end position="105"/>
    </location>
</feature>
<feature type="region of interest" description="Myosin-binding">
    <location>
        <begin position="143"/>
        <end position="560"/>
    </location>
</feature>
<feature type="region of interest" description="PKA-binding" evidence="1">
    <location>
        <begin position="193"/>
        <end position="209"/>
    </location>
</feature>
<feature type="region of interest" description="Negative regulation of PKA-binding" evidence="1">
    <location>
        <begin position="232"/>
        <end position="248"/>
    </location>
</feature>
<feature type="region of interest" description="Disordered" evidence="5">
    <location>
        <begin position="251"/>
        <end position="285"/>
    </location>
</feature>
<feature type="region of interest" description="Disordered" evidence="5">
    <location>
        <begin position="302"/>
        <end position="374"/>
    </location>
</feature>
<feature type="region of interest" description="Disordered" evidence="5">
    <location>
        <begin position="386"/>
        <end position="629"/>
    </location>
</feature>
<feature type="region of interest" description="Actin-binding">
    <location>
        <begin position="495"/>
        <end position="856"/>
    </location>
</feature>
<feature type="region of interest" description="Disordered" evidence="5">
    <location>
        <begin position="783"/>
        <end position="812"/>
    </location>
</feature>
<feature type="compositionally biased region" description="Basic and acidic residues" evidence="5">
    <location>
        <begin position="316"/>
        <end position="326"/>
    </location>
</feature>
<feature type="compositionally biased region" description="Acidic residues" evidence="5">
    <location>
        <begin position="393"/>
        <end position="403"/>
    </location>
</feature>
<feature type="compositionally biased region" description="Low complexity" evidence="5">
    <location>
        <begin position="435"/>
        <end position="450"/>
    </location>
</feature>
<feature type="compositionally biased region" description="Basic and acidic residues" evidence="5">
    <location>
        <begin position="484"/>
        <end position="494"/>
    </location>
</feature>
<feature type="compositionally biased region" description="Basic and acidic residues" evidence="5">
    <location>
        <begin position="607"/>
        <end position="617"/>
    </location>
</feature>
<feature type="compositionally biased region" description="Polar residues" evidence="5">
    <location>
        <begin position="618"/>
        <end position="629"/>
    </location>
</feature>
<feature type="compositionally biased region" description="Polar residues" evidence="5">
    <location>
        <begin position="787"/>
        <end position="796"/>
    </location>
</feature>
<feature type="modified residue" description="Phosphoserine" evidence="3">
    <location>
        <position position="298"/>
    </location>
</feature>
<feature type="modified residue" description="Phosphoserine" evidence="2">
    <location>
        <position position="350"/>
    </location>
</feature>
<feature type="splice variant" id="VSP_043539" description="In isoform 4." evidence="7">
    <location>
        <begin position="1"/>
        <end position="187"/>
    </location>
</feature>
<feature type="splice variant" id="VSP_043540" description="In isoform 3." evidence="7">
    <original>MGRKLDLSGLTDDETEHVLQVVQRDFNLRKKEEERLSELKQKLDEEGSKCSILSKHQQFVEHCCMRCCSPFTFLVNTKRQCGDCKFNVCKSCCSYQKHEKAWVCCVCQQARL</original>
    <variation>MQKSLRPIGL</variation>
    <location>
        <begin position="1"/>
        <end position="112"/>
    </location>
</feature>
<feature type="splice variant" id="VSP_054896" description="In isoform 6." evidence="8">
    <original>MGRKLDLSGLTDDETEHVLQVVQRDFNLRKKEEERLSELKQKLDEEGSKCSILSKHQQFVEHCCMRC</original>
    <variation>MRKAASAASSRSTSSLWSTAACAAARPSPSSSTPSASVEIANSMSARAAAPTRSTKRPGSAASASKR</variation>
    <location>
        <begin position="1"/>
        <end position="67"/>
    </location>
</feature>
<feature type="splice variant" id="VSP_054897" description="In isoform 6." evidence="8">
    <location>
        <begin position="68"/>
        <end position="156"/>
    </location>
</feature>
<feature type="splice variant" id="VSP_043541" description="In isoform 2." evidence="7">
    <location>
        <begin position="636"/>
        <end position="700"/>
    </location>
</feature>
<feature type="splice variant" id="VSP_043542" description="In isoform 5." evidence="8">
    <original>F</original>
    <variation>S</variation>
    <location>
        <position position="637"/>
    </location>
</feature>
<feature type="splice variant" id="VSP_043543" description="In isoform 5." evidence="8">
    <location>
        <begin position="638"/>
        <end position="859"/>
    </location>
</feature>
<feature type="sequence variant" id="VAR_061755" description="In dbSNP:rs59923220." evidence="6">
    <original>A</original>
    <variation>T</variation>
    <location>
        <position position="312"/>
    </location>
</feature>
<feature type="sequence variant" id="VAR_061756" description="In dbSNP:rs55785561.">
    <original>P</original>
    <variation>L</variation>
    <location>
        <position position="365"/>
    </location>
</feature>
<feature type="sequence variant" id="VAR_051717" description="In dbSNP:rs34800524.">
    <original>P</original>
    <variation>S</variation>
    <location>
        <position position="673"/>
    </location>
</feature>
<feature type="sequence conflict" description="In Ref. 3; BAG54185." evidence="9" ref="3">
    <original>K</original>
    <variation>E</variation>
    <location>
        <position position="130"/>
    </location>
</feature>
<feature type="sequence conflict" description="In Ref. 3; BAG54276." evidence="9" ref="3">
    <original>R</original>
    <variation>G</variation>
    <location>
        <position position="529"/>
    </location>
</feature>
<feature type="sequence conflict" description="In Ref. 3; BAG54276." evidence="9" ref="3">
    <original>E</original>
    <variation>G</variation>
    <location>
        <position position="536"/>
    </location>
</feature>
<feature type="sequence conflict" description="In Ref. 1; AAM43954." evidence="9" ref="1">
    <original>D</original>
    <variation>E</variation>
    <location>
        <position position="571"/>
    </location>
</feature>
<feature type="sequence conflict" description="In Ref. 3; BAH14439." evidence="9" ref="3">
    <original>A</original>
    <variation>T</variation>
    <location>
        <position position="773"/>
    </location>
</feature>
<organism>
    <name type="scientific">Homo sapiens</name>
    <name type="common">Human</name>
    <dbReference type="NCBI Taxonomy" id="9606"/>
    <lineage>
        <taxon>Eukaryota</taxon>
        <taxon>Metazoa</taxon>
        <taxon>Chordata</taxon>
        <taxon>Craniata</taxon>
        <taxon>Vertebrata</taxon>
        <taxon>Euteleostomi</taxon>
        <taxon>Mammalia</taxon>
        <taxon>Eutheria</taxon>
        <taxon>Euarchontoglires</taxon>
        <taxon>Primates</taxon>
        <taxon>Haplorrhini</taxon>
        <taxon>Catarrhini</taxon>
        <taxon>Hominidae</taxon>
        <taxon>Homo</taxon>
    </lineage>
</organism>
<proteinExistence type="evidence at protein level"/>
<comment type="function">
    <text evidence="1">Rab effector protein involved in melanosome transport. Serves as link between melanosome-bound RAB27A and the motor proteins MYO5A and MYO7A. May link RAB27A-containing vesicles to actin filaments. Functions as a protein kinase A-anchoring protein (AKAP). May act as a scaffolding protein that links PKA to components of the exocytosis machinery, thus facilitating exocytosis, including insulin release (By similarity).</text>
</comment>
<comment type="subunit">
    <text evidence="1">Binds MYO5A, MYO7A and F-actin (By similarity). Binds RAB27A that has been activated by GTP-binding via its N-terminus. Interacts with PRKAR2A. Interacts with components of the exocyst complex, including EXOC3 and EXOC4 (By similarity).</text>
</comment>
<comment type="interaction">
    <interactant intactId="EBI-1759414">
        <id>Q8NFW9</id>
    </interactant>
    <interactant intactId="EBI-747505">
        <id>Q8TAB5</id>
        <label>C1orf216</label>
    </interactant>
    <organismsDiffer>false</organismsDiffer>
    <experiments>6</experiments>
</comment>
<comment type="interaction">
    <interactant intactId="EBI-1759414">
        <id>Q8NFW9</id>
    </interactant>
    <interactant intactId="EBI-536879">
        <id>O43482</id>
        <label>OIP5</label>
    </interactant>
    <organismsDiffer>false</organismsDiffer>
    <experiments>3</experiments>
</comment>
<comment type="interaction">
    <interactant intactId="EBI-1759414">
        <id>Q8NFW9</id>
    </interactant>
    <interactant intactId="EBI-716881">
        <id>P51159</id>
        <label>RAB27A</label>
    </interactant>
    <organismsDiffer>false</organismsDiffer>
    <experiments>3</experiments>
</comment>
<comment type="interaction">
    <interactant intactId="EBI-1759414">
        <id>Q8NFW9</id>
    </interactant>
    <interactant intactId="EBI-10179046">
        <id>O00194</id>
        <label>RAB27B</label>
    </interactant>
    <organismsDiffer>false</organismsDiffer>
    <experiments>3</experiments>
</comment>
<comment type="subcellular location">
    <subcellularLocation>
        <location evidence="3">Cytoplasm</location>
    </subcellularLocation>
    <subcellularLocation>
        <location evidence="2">Cytoplasm</location>
        <location evidence="2">Perinuclear region</location>
    </subcellularLocation>
    <subcellularLocation>
        <location evidence="2">Cytoplasmic vesicle</location>
        <location evidence="2">Secretory vesicle</location>
    </subcellularLocation>
    <text evidence="2">In presynaptic and postsynaptic areas in photoreceptor cells and in the basal microvilli of retinal pigment epithelium cells. Associated with melanosomes. Colocalizes with actin filaments.</text>
</comment>
<comment type="alternative products">
    <event type="alternative splicing"/>
    <isoform>
        <id>Q8NFW9-1</id>
        <name>1</name>
        <sequence type="displayed"/>
    </isoform>
    <isoform>
        <id>Q8NFW9-2</id>
        <name>2</name>
        <sequence type="described" ref="VSP_043541"/>
    </isoform>
    <isoform>
        <id>Q8NFW9-3</id>
        <name>3</name>
        <sequence type="described" ref="VSP_043540"/>
    </isoform>
    <isoform>
        <id>Q8NFW9-4</id>
        <name>4</name>
        <sequence type="described" ref="VSP_043539"/>
    </isoform>
    <isoform>
        <id>Q8NFW9-5</id>
        <name>5</name>
        <sequence type="described" ref="VSP_043542 VSP_043543"/>
    </isoform>
    <isoform>
        <id>Q8NFW9-6</id>
        <name>6</name>
        <sequence type="described" ref="VSP_054896 VSP_054897"/>
    </isoform>
</comment>
<comment type="tissue specificity">
    <text>Detected in brain, skin, heart, adrenal medulla, pancreas, intestine, liver, kidney, muscle and testis.</text>
</comment>
<keyword id="KW-0009">Actin-binding</keyword>
<keyword id="KW-0025">Alternative splicing</keyword>
<keyword id="KW-0963">Cytoplasm</keyword>
<keyword id="KW-0968">Cytoplasmic vesicle</keyword>
<keyword id="KW-0479">Metal-binding</keyword>
<keyword id="KW-0597">Phosphoprotein</keyword>
<keyword id="KW-1267">Proteomics identification</keyword>
<keyword id="KW-1185">Reference proteome</keyword>
<keyword id="KW-0677">Repeat</keyword>
<keyword id="KW-0862">Zinc</keyword>
<keyword id="KW-0863">Zinc-finger</keyword>
<sequence>MGRKLDLSGLTDDETEHVLQVVQRDFNLRKKEEERLSELKQKLDEEGSKCSILSKHQQFVEHCCMRCCSPFTFLVNTKRQCGDCKFNVCKSCCSYQKHEKAWVCCVCQQARLLRAQSLEWFYNNVKSRFKRFGSAKVLKNLYRKHRLESGACFDILGGSLFESNLENEGSISGSDSTFYRQSEGHSVMDTLAVALRVAEEAIEEAISKAEAYGDSLDKQNEASYLRDHKEELTEELATTILQKIIRKQKSKSEQQVEEEPGWPHPQSCSTKVADEGTSASPGGYRAPAALWRSQSAFSITGEEALKTPPVEAPSRQPRDQGQHPRAESALPSWKSVDRLDETNLAPVLQSPDGNWVALKDGAPPPTRLLAKPKSGTFQALEVASSVASAYDEMGSDSEEDFDWSEALSKLCPRSRALPRNPQPQPTQAQSSDQGPIAASPSSALSPNPEAMCSDSETSSAGSSREVGHQARLSWLQRKAPRNPAAEKMRLHGELDVNFNPQLASRETSDSSEPEEAPHTTDRRARRWRRARLGSEEPSKEPSSPSAQLRDLDTHQVSDDLSETDISNEARDPQTLTDTTEEKRRNRLYELAMKMSEKETSSGEDQESEPKTESENQKESLSSEDNSQSVQEELKKKFSAVSLCNISTEVLKVINATEELIAGSTGPWESPQVPPDRQKGMFPRGTDQVRLDEQLTSLEENVYLAAGTVYGLETQLTELEDAARCIHSGTDETHLADLEDQVATAAAQVHHAELQISDIESRISALTIAGLNIAPCVRFTRRRDQKQRTQVQTIDTSRQQRRKLPAPPVKAEKIETSSVTTIKTFNHNFILQGSSTNRTKERKGTTKDLMEPALESAVMY</sequence>
<evidence type="ECO:0000250" key="1"/>
<evidence type="ECO:0000250" key="2">
    <source>
        <dbReference type="UniProtKB" id="Q7TNY7"/>
    </source>
</evidence>
<evidence type="ECO:0000250" key="3">
    <source>
        <dbReference type="UniProtKB" id="Q8K3I4"/>
    </source>
</evidence>
<evidence type="ECO:0000255" key="4">
    <source>
        <dbReference type="PROSITE-ProRule" id="PRU00234"/>
    </source>
</evidence>
<evidence type="ECO:0000256" key="5">
    <source>
        <dbReference type="SAM" id="MobiDB-lite"/>
    </source>
</evidence>
<evidence type="ECO:0000269" key="6">
    <source>
    </source>
</evidence>
<evidence type="ECO:0000303" key="7">
    <source>
    </source>
</evidence>
<evidence type="ECO:0000303" key="8">
    <source>
    </source>
</evidence>
<evidence type="ECO:0000305" key="9"/>
<name>MYRIP_HUMAN</name>
<dbReference type="EMBL" id="AF396687">
    <property type="protein sequence ID" value="AAM43954.1"/>
    <property type="molecule type" value="mRNA"/>
</dbReference>
<dbReference type="EMBL" id="AB083783">
    <property type="protein sequence ID" value="BAC15555.1"/>
    <property type="molecule type" value="mRNA"/>
</dbReference>
<dbReference type="EMBL" id="AK125334">
    <property type="protein sequence ID" value="BAG54185.1"/>
    <property type="molecule type" value="mRNA"/>
</dbReference>
<dbReference type="EMBL" id="AK126013">
    <property type="protein sequence ID" value="BAG54276.1"/>
    <property type="molecule type" value="mRNA"/>
</dbReference>
<dbReference type="EMBL" id="AK294714">
    <property type="protein sequence ID" value="BAH11857.1"/>
    <property type="molecule type" value="mRNA"/>
</dbReference>
<dbReference type="EMBL" id="AK316068">
    <property type="protein sequence ID" value="BAH14439.1"/>
    <property type="molecule type" value="mRNA"/>
</dbReference>
<dbReference type="EMBL" id="AC099331">
    <property type="status" value="NOT_ANNOTATED_CDS"/>
    <property type="molecule type" value="Genomic_DNA"/>
</dbReference>
<dbReference type="EMBL" id="AC099557">
    <property type="status" value="NOT_ANNOTATED_CDS"/>
    <property type="molecule type" value="Genomic_DNA"/>
</dbReference>
<dbReference type="EMBL" id="AC104188">
    <property type="status" value="NOT_ANNOTATED_CDS"/>
    <property type="molecule type" value="Genomic_DNA"/>
</dbReference>
<dbReference type="EMBL" id="AC110718">
    <property type="status" value="NOT_ANNOTATED_CDS"/>
    <property type="molecule type" value="Genomic_DNA"/>
</dbReference>
<dbReference type="EMBL" id="AC130439">
    <property type="status" value="NOT_ANNOTATED_CDS"/>
    <property type="molecule type" value="Genomic_DNA"/>
</dbReference>
<dbReference type="EMBL" id="CH471055">
    <property type="protein sequence ID" value="EAW64595.1"/>
    <property type="molecule type" value="Genomic_DNA"/>
</dbReference>
<dbReference type="EMBL" id="BC092512">
    <property type="protein sequence ID" value="AAH92512.1"/>
    <property type="molecule type" value="mRNA"/>
</dbReference>
<dbReference type="EMBL" id="BC109311">
    <property type="protein sequence ID" value="AAI09312.1"/>
    <property type="molecule type" value="mRNA"/>
</dbReference>
<dbReference type="EMBL" id="BC109312">
    <property type="protein sequence ID" value="AAI09313.1"/>
    <property type="molecule type" value="mRNA"/>
</dbReference>
<dbReference type="EMBL" id="AL050090">
    <property type="protein sequence ID" value="CAB43262.1"/>
    <property type="molecule type" value="mRNA"/>
</dbReference>
<dbReference type="CCDS" id="CCDS2689.1">
    <molecule id="Q8NFW9-1"/>
</dbReference>
<dbReference type="CCDS" id="CCDS68390.1">
    <molecule id="Q8NFW9-2"/>
</dbReference>
<dbReference type="CCDS" id="CCDS68391.1">
    <molecule id="Q8NFW9-6"/>
</dbReference>
<dbReference type="CCDS" id="CCDS68392.1">
    <molecule id="Q8NFW9-4"/>
</dbReference>
<dbReference type="PIR" id="T08739">
    <property type="entry name" value="T08739"/>
</dbReference>
<dbReference type="RefSeq" id="NP_001271352.1">
    <molecule id="Q8NFW9-1"/>
    <property type="nucleotide sequence ID" value="NM_001284423.2"/>
</dbReference>
<dbReference type="RefSeq" id="NP_001271353.1">
    <molecule id="Q8NFW9-2"/>
    <property type="nucleotide sequence ID" value="NM_001284424.2"/>
</dbReference>
<dbReference type="RefSeq" id="NP_001271354.1">
    <molecule id="Q8NFW9-6"/>
    <property type="nucleotide sequence ID" value="NM_001284425.2"/>
</dbReference>
<dbReference type="RefSeq" id="NP_001271355.1">
    <molecule id="Q8NFW9-4"/>
    <property type="nucleotide sequence ID" value="NM_001284426.2"/>
</dbReference>
<dbReference type="RefSeq" id="NP_056275.2">
    <molecule id="Q8NFW9-1"/>
    <property type="nucleotide sequence ID" value="NM_015460.4"/>
</dbReference>
<dbReference type="RefSeq" id="XP_011531877.1">
    <molecule id="Q8NFW9-1"/>
    <property type="nucleotide sequence ID" value="XM_011533575.2"/>
</dbReference>
<dbReference type="RefSeq" id="XP_054202076.1">
    <molecule id="Q8NFW9-1"/>
    <property type="nucleotide sequence ID" value="XM_054346101.1"/>
</dbReference>
<dbReference type="SMR" id="Q8NFW9"/>
<dbReference type="BioGRID" id="117424">
    <property type="interactions" value="7"/>
</dbReference>
<dbReference type="DIP" id="DIP-48949N"/>
<dbReference type="FunCoup" id="Q8NFW9">
    <property type="interactions" value="123"/>
</dbReference>
<dbReference type="IntAct" id="Q8NFW9">
    <property type="interactions" value="10"/>
</dbReference>
<dbReference type="MINT" id="Q8NFW9"/>
<dbReference type="STRING" id="9606.ENSP00000301972"/>
<dbReference type="GlyCosmos" id="Q8NFW9">
    <property type="glycosylation" value="8 sites, 1 glycan"/>
</dbReference>
<dbReference type="GlyGen" id="Q8NFW9">
    <property type="glycosylation" value="1 site"/>
</dbReference>
<dbReference type="iPTMnet" id="Q8NFW9"/>
<dbReference type="PhosphoSitePlus" id="Q8NFW9"/>
<dbReference type="BioMuta" id="MYRIP"/>
<dbReference type="DMDM" id="116242669"/>
<dbReference type="jPOST" id="Q8NFW9"/>
<dbReference type="MassIVE" id="Q8NFW9"/>
<dbReference type="PaxDb" id="9606-ENSP00000301972"/>
<dbReference type="PeptideAtlas" id="Q8NFW9"/>
<dbReference type="ProteomicsDB" id="61588"/>
<dbReference type="ProteomicsDB" id="73377">
    <molecule id="Q8NFW9-1"/>
</dbReference>
<dbReference type="ProteomicsDB" id="73378">
    <molecule id="Q8NFW9-2"/>
</dbReference>
<dbReference type="ProteomicsDB" id="73379">
    <molecule id="Q8NFW9-3"/>
</dbReference>
<dbReference type="ProteomicsDB" id="73380">
    <molecule id="Q8NFW9-4"/>
</dbReference>
<dbReference type="ProteomicsDB" id="73381">
    <molecule id="Q8NFW9-5"/>
</dbReference>
<dbReference type="Antibodypedia" id="28983">
    <property type="antibodies" value="163 antibodies from 26 providers"/>
</dbReference>
<dbReference type="DNASU" id="25924"/>
<dbReference type="Ensembl" id="ENST00000302541.11">
    <molecule id="Q8NFW9-1"/>
    <property type="protein sequence ID" value="ENSP00000301972.6"/>
    <property type="gene ID" value="ENSG00000170011.14"/>
</dbReference>
<dbReference type="Ensembl" id="ENST00000396217.7">
    <molecule id="Q8NFW9-6"/>
    <property type="protein sequence ID" value="ENSP00000379519.3"/>
    <property type="gene ID" value="ENSG00000170011.14"/>
</dbReference>
<dbReference type="Ensembl" id="ENST00000425621.5">
    <molecule id="Q8NFW9-2"/>
    <property type="protein sequence ID" value="ENSP00000389323.1"/>
    <property type="gene ID" value="ENSG00000170011.14"/>
</dbReference>
<dbReference type="Ensembl" id="ENST00000444716.5">
    <molecule id="Q8NFW9-1"/>
    <property type="protein sequence ID" value="ENSP00000398665.1"/>
    <property type="gene ID" value="ENSG00000170011.14"/>
</dbReference>
<dbReference type="Ensembl" id="ENST00000458292.5">
    <molecule id="Q8NFW9-5"/>
    <property type="protein sequence ID" value="ENSP00000413392.1"/>
    <property type="gene ID" value="ENSG00000170011.14"/>
</dbReference>
<dbReference type="Ensembl" id="ENST00000539167.2">
    <molecule id="Q8NFW9-4"/>
    <property type="protein sequence ID" value="ENSP00000438297.1"/>
    <property type="gene ID" value="ENSG00000170011.14"/>
</dbReference>
<dbReference type="GeneID" id="25924"/>
<dbReference type="KEGG" id="hsa:25924"/>
<dbReference type="MANE-Select" id="ENST00000302541.11">
    <property type="protein sequence ID" value="ENSP00000301972.6"/>
    <property type="RefSeq nucleotide sequence ID" value="NM_015460.4"/>
    <property type="RefSeq protein sequence ID" value="NP_056275.2"/>
</dbReference>
<dbReference type="UCSC" id="uc003cka.5">
    <molecule id="Q8NFW9-1"/>
    <property type="organism name" value="human"/>
</dbReference>
<dbReference type="AGR" id="HGNC:19156"/>
<dbReference type="CTD" id="25924"/>
<dbReference type="DisGeNET" id="25924"/>
<dbReference type="GeneCards" id="MYRIP"/>
<dbReference type="HGNC" id="HGNC:19156">
    <property type="gene designation" value="MYRIP"/>
</dbReference>
<dbReference type="HPA" id="ENSG00000170011">
    <property type="expression patterns" value="Tissue enhanced (brain)"/>
</dbReference>
<dbReference type="MIM" id="611790">
    <property type="type" value="gene"/>
</dbReference>
<dbReference type="neXtProt" id="NX_Q8NFW9"/>
<dbReference type="OpenTargets" id="ENSG00000170011"/>
<dbReference type="PharmGKB" id="PA38800"/>
<dbReference type="VEuPathDB" id="HostDB:ENSG00000170011"/>
<dbReference type="eggNOG" id="ENOG502QPUS">
    <property type="taxonomic scope" value="Eukaryota"/>
</dbReference>
<dbReference type="GeneTree" id="ENSGT00950000183138"/>
<dbReference type="HOGENOM" id="CLU_008568_0_0_1"/>
<dbReference type="InParanoid" id="Q8NFW9"/>
<dbReference type="OMA" id="IHSGTQD"/>
<dbReference type="OrthoDB" id="10072397at2759"/>
<dbReference type="PAN-GO" id="Q8NFW9">
    <property type="GO annotations" value="3 GO annotations based on evolutionary models"/>
</dbReference>
<dbReference type="PhylomeDB" id="Q8NFW9"/>
<dbReference type="TreeFam" id="TF331599"/>
<dbReference type="PathwayCommons" id="Q8NFW9"/>
<dbReference type="Reactome" id="R-HSA-264876">
    <property type="pathway name" value="Insulin processing"/>
</dbReference>
<dbReference type="Reactome" id="R-HSA-9824585">
    <property type="pathway name" value="Regulation of MITF-M-dependent genes involved in pigmentation"/>
</dbReference>
<dbReference type="SignaLink" id="Q8NFW9"/>
<dbReference type="BioGRID-ORCS" id="25924">
    <property type="hits" value="13 hits in 1144 CRISPR screens"/>
</dbReference>
<dbReference type="ChiTaRS" id="MYRIP">
    <property type="organism name" value="human"/>
</dbReference>
<dbReference type="GenomeRNAi" id="25924"/>
<dbReference type="Pharos" id="Q8NFW9">
    <property type="development level" value="Tbio"/>
</dbReference>
<dbReference type="PRO" id="PR:Q8NFW9"/>
<dbReference type="Proteomes" id="UP000005640">
    <property type="component" value="Chromosome 3"/>
</dbReference>
<dbReference type="RNAct" id="Q8NFW9">
    <property type="molecule type" value="protein"/>
</dbReference>
<dbReference type="Bgee" id="ENSG00000170011">
    <property type="expression patterns" value="Expressed in pigmented layer of retina and 180 other cell types or tissues"/>
</dbReference>
<dbReference type="ExpressionAtlas" id="Q8NFW9">
    <property type="expression patterns" value="baseline and differential"/>
</dbReference>
<dbReference type="GO" id="GO:0030864">
    <property type="term" value="C:cortical actin cytoskeleton"/>
    <property type="evidence" value="ECO:0000318"/>
    <property type="project" value="GO_Central"/>
</dbReference>
<dbReference type="GO" id="GO:0005829">
    <property type="term" value="C:cytosol"/>
    <property type="evidence" value="ECO:0000304"/>
    <property type="project" value="Reactome"/>
</dbReference>
<dbReference type="GO" id="GO:0031045">
    <property type="term" value="C:dense core granule"/>
    <property type="evidence" value="ECO:0000250"/>
    <property type="project" value="UniProtKB"/>
</dbReference>
<dbReference type="GO" id="GO:0000145">
    <property type="term" value="C:exocyst"/>
    <property type="evidence" value="ECO:0007669"/>
    <property type="project" value="Ensembl"/>
</dbReference>
<dbReference type="GO" id="GO:0042470">
    <property type="term" value="C:melanosome"/>
    <property type="evidence" value="ECO:0007669"/>
    <property type="project" value="Ensembl"/>
</dbReference>
<dbReference type="GO" id="GO:0048471">
    <property type="term" value="C:perinuclear region of cytoplasm"/>
    <property type="evidence" value="ECO:0000250"/>
    <property type="project" value="UniProtKB"/>
</dbReference>
<dbReference type="GO" id="GO:0001750">
    <property type="term" value="C:photoreceptor outer segment"/>
    <property type="evidence" value="ECO:0007669"/>
    <property type="project" value="Ensembl"/>
</dbReference>
<dbReference type="GO" id="GO:0045202">
    <property type="term" value="C:synapse"/>
    <property type="evidence" value="ECO:0007669"/>
    <property type="project" value="Ensembl"/>
</dbReference>
<dbReference type="GO" id="GO:0030133">
    <property type="term" value="C:transport vesicle"/>
    <property type="evidence" value="ECO:0007669"/>
    <property type="project" value="UniProtKB-SubCell"/>
</dbReference>
<dbReference type="GO" id="GO:0003779">
    <property type="term" value="F:actin binding"/>
    <property type="evidence" value="ECO:0000318"/>
    <property type="project" value="GO_Central"/>
</dbReference>
<dbReference type="GO" id="GO:0017022">
    <property type="term" value="F:myosin binding"/>
    <property type="evidence" value="ECO:0000318"/>
    <property type="project" value="GO_Central"/>
</dbReference>
<dbReference type="GO" id="GO:0051018">
    <property type="term" value="F:protein kinase A binding"/>
    <property type="evidence" value="ECO:0007669"/>
    <property type="project" value="Ensembl"/>
</dbReference>
<dbReference type="GO" id="GO:0031267">
    <property type="term" value="F:small GTPase binding"/>
    <property type="evidence" value="ECO:0007669"/>
    <property type="project" value="Ensembl"/>
</dbReference>
<dbReference type="GO" id="GO:0008270">
    <property type="term" value="F:zinc ion binding"/>
    <property type="evidence" value="ECO:0000303"/>
    <property type="project" value="UniProtKB"/>
</dbReference>
<dbReference type="GO" id="GO:0006886">
    <property type="term" value="P:intracellular protein transport"/>
    <property type="evidence" value="ECO:0007669"/>
    <property type="project" value="InterPro"/>
</dbReference>
<dbReference type="GO" id="GO:0032024">
    <property type="term" value="P:positive regulation of insulin secretion"/>
    <property type="evidence" value="ECO:0000250"/>
    <property type="project" value="UniProtKB"/>
</dbReference>
<dbReference type="FunFam" id="3.30.40.10:FF:000018">
    <property type="entry name" value="Synaptotagmin-like 5, isoform CRA_a"/>
    <property type="match status" value="1"/>
</dbReference>
<dbReference type="Gene3D" id="3.30.40.10">
    <property type="entry name" value="Zinc/RING finger domain, C3HC4 (zinc finger)"/>
    <property type="match status" value="1"/>
</dbReference>
<dbReference type="InterPro" id="IPR041282">
    <property type="entry name" value="FYVE_2"/>
</dbReference>
<dbReference type="InterPro" id="IPR051745">
    <property type="entry name" value="Intracell_Transport_Effector"/>
</dbReference>
<dbReference type="InterPro" id="IPR006788">
    <property type="entry name" value="Myrip/Melanophilin"/>
</dbReference>
<dbReference type="InterPro" id="IPR010911">
    <property type="entry name" value="Rab_BD"/>
</dbReference>
<dbReference type="InterPro" id="IPR011011">
    <property type="entry name" value="Znf_FYVE_PHD"/>
</dbReference>
<dbReference type="InterPro" id="IPR013083">
    <property type="entry name" value="Znf_RING/FYVE/PHD"/>
</dbReference>
<dbReference type="PANTHER" id="PTHR14555">
    <property type="entry name" value="MYELIN-ASSOCIATED OLIGODENDROCYTIC BASIC PROTEIN MOBP -RELATED"/>
    <property type="match status" value="1"/>
</dbReference>
<dbReference type="PANTHER" id="PTHR14555:SF6">
    <property type="entry name" value="RAB EFFECTOR MYRIP"/>
    <property type="match status" value="1"/>
</dbReference>
<dbReference type="Pfam" id="PF02318">
    <property type="entry name" value="FYVE_2"/>
    <property type="match status" value="1"/>
</dbReference>
<dbReference type="Pfam" id="PF04698">
    <property type="entry name" value="Rab_eff_C"/>
    <property type="match status" value="1"/>
</dbReference>
<dbReference type="SUPFAM" id="SSF57903">
    <property type="entry name" value="FYVE/PHD zinc finger"/>
    <property type="match status" value="1"/>
</dbReference>
<dbReference type="PROSITE" id="PS50916">
    <property type="entry name" value="RABBD"/>
    <property type="match status" value="1"/>
</dbReference>